<reference key="1">
    <citation type="journal article" date="2005" name="Science">
        <title>The transcriptional landscape of the mammalian genome.</title>
        <authorList>
            <person name="Carninci P."/>
            <person name="Kasukawa T."/>
            <person name="Katayama S."/>
            <person name="Gough J."/>
            <person name="Frith M.C."/>
            <person name="Maeda N."/>
            <person name="Oyama R."/>
            <person name="Ravasi T."/>
            <person name="Lenhard B."/>
            <person name="Wells C."/>
            <person name="Kodzius R."/>
            <person name="Shimokawa K."/>
            <person name="Bajic V.B."/>
            <person name="Brenner S.E."/>
            <person name="Batalov S."/>
            <person name="Forrest A.R."/>
            <person name="Zavolan M."/>
            <person name="Davis M.J."/>
            <person name="Wilming L.G."/>
            <person name="Aidinis V."/>
            <person name="Allen J.E."/>
            <person name="Ambesi-Impiombato A."/>
            <person name="Apweiler R."/>
            <person name="Aturaliya R.N."/>
            <person name="Bailey T.L."/>
            <person name="Bansal M."/>
            <person name="Baxter L."/>
            <person name="Beisel K.W."/>
            <person name="Bersano T."/>
            <person name="Bono H."/>
            <person name="Chalk A.M."/>
            <person name="Chiu K.P."/>
            <person name="Choudhary V."/>
            <person name="Christoffels A."/>
            <person name="Clutterbuck D.R."/>
            <person name="Crowe M.L."/>
            <person name="Dalla E."/>
            <person name="Dalrymple B.P."/>
            <person name="de Bono B."/>
            <person name="Della Gatta G."/>
            <person name="di Bernardo D."/>
            <person name="Down T."/>
            <person name="Engstrom P."/>
            <person name="Fagiolini M."/>
            <person name="Faulkner G."/>
            <person name="Fletcher C.F."/>
            <person name="Fukushima T."/>
            <person name="Furuno M."/>
            <person name="Futaki S."/>
            <person name="Gariboldi M."/>
            <person name="Georgii-Hemming P."/>
            <person name="Gingeras T.R."/>
            <person name="Gojobori T."/>
            <person name="Green R.E."/>
            <person name="Gustincich S."/>
            <person name="Harbers M."/>
            <person name="Hayashi Y."/>
            <person name="Hensch T.K."/>
            <person name="Hirokawa N."/>
            <person name="Hill D."/>
            <person name="Huminiecki L."/>
            <person name="Iacono M."/>
            <person name="Ikeo K."/>
            <person name="Iwama A."/>
            <person name="Ishikawa T."/>
            <person name="Jakt M."/>
            <person name="Kanapin A."/>
            <person name="Katoh M."/>
            <person name="Kawasawa Y."/>
            <person name="Kelso J."/>
            <person name="Kitamura H."/>
            <person name="Kitano H."/>
            <person name="Kollias G."/>
            <person name="Krishnan S.P."/>
            <person name="Kruger A."/>
            <person name="Kummerfeld S.K."/>
            <person name="Kurochkin I.V."/>
            <person name="Lareau L.F."/>
            <person name="Lazarevic D."/>
            <person name="Lipovich L."/>
            <person name="Liu J."/>
            <person name="Liuni S."/>
            <person name="McWilliam S."/>
            <person name="Madan Babu M."/>
            <person name="Madera M."/>
            <person name="Marchionni L."/>
            <person name="Matsuda H."/>
            <person name="Matsuzawa S."/>
            <person name="Miki H."/>
            <person name="Mignone F."/>
            <person name="Miyake S."/>
            <person name="Morris K."/>
            <person name="Mottagui-Tabar S."/>
            <person name="Mulder N."/>
            <person name="Nakano N."/>
            <person name="Nakauchi H."/>
            <person name="Ng P."/>
            <person name="Nilsson R."/>
            <person name="Nishiguchi S."/>
            <person name="Nishikawa S."/>
            <person name="Nori F."/>
            <person name="Ohara O."/>
            <person name="Okazaki Y."/>
            <person name="Orlando V."/>
            <person name="Pang K.C."/>
            <person name="Pavan W.J."/>
            <person name="Pavesi G."/>
            <person name="Pesole G."/>
            <person name="Petrovsky N."/>
            <person name="Piazza S."/>
            <person name="Reed J."/>
            <person name="Reid J.F."/>
            <person name="Ring B.Z."/>
            <person name="Ringwald M."/>
            <person name="Rost B."/>
            <person name="Ruan Y."/>
            <person name="Salzberg S.L."/>
            <person name="Sandelin A."/>
            <person name="Schneider C."/>
            <person name="Schoenbach C."/>
            <person name="Sekiguchi K."/>
            <person name="Semple C.A."/>
            <person name="Seno S."/>
            <person name="Sessa L."/>
            <person name="Sheng Y."/>
            <person name="Shibata Y."/>
            <person name="Shimada H."/>
            <person name="Shimada K."/>
            <person name="Silva D."/>
            <person name="Sinclair B."/>
            <person name="Sperling S."/>
            <person name="Stupka E."/>
            <person name="Sugiura K."/>
            <person name="Sultana R."/>
            <person name="Takenaka Y."/>
            <person name="Taki K."/>
            <person name="Tammoja K."/>
            <person name="Tan S.L."/>
            <person name="Tang S."/>
            <person name="Taylor M.S."/>
            <person name="Tegner J."/>
            <person name="Teichmann S.A."/>
            <person name="Ueda H.R."/>
            <person name="van Nimwegen E."/>
            <person name="Verardo R."/>
            <person name="Wei C.L."/>
            <person name="Yagi K."/>
            <person name="Yamanishi H."/>
            <person name="Zabarovsky E."/>
            <person name="Zhu S."/>
            <person name="Zimmer A."/>
            <person name="Hide W."/>
            <person name="Bult C."/>
            <person name="Grimmond S.M."/>
            <person name="Teasdale R.D."/>
            <person name="Liu E.T."/>
            <person name="Brusic V."/>
            <person name="Quackenbush J."/>
            <person name="Wahlestedt C."/>
            <person name="Mattick J.S."/>
            <person name="Hume D.A."/>
            <person name="Kai C."/>
            <person name="Sasaki D."/>
            <person name="Tomaru Y."/>
            <person name="Fukuda S."/>
            <person name="Kanamori-Katayama M."/>
            <person name="Suzuki M."/>
            <person name="Aoki J."/>
            <person name="Arakawa T."/>
            <person name="Iida J."/>
            <person name="Imamura K."/>
            <person name="Itoh M."/>
            <person name="Kato T."/>
            <person name="Kawaji H."/>
            <person name="Kawagashira N."/>
            <person name="Kawashima T."/>
            <person name="Kojima M."/>
            <person name="Kondo S."/>
            <person name="Konno H."/>
            <person name="Nakano K."/>
            <person name="Ninomiya N."/>
            <person name="Nishio T."/>
            <person name="Okada M."/>
            <person name="Plessy C."/>
            <person name="Shibata K."/>
            <person name="Shiraki T."/>
            <person name="Suzuki S."/>
            <person name="Tagami M."/>
            <person name="Waki K."/>
            <person name="Watahiki A."/>
            <person name="Okamura-Oho Y."/>
            <person name="Suzuki H."/>
            <person name="Kawai J."/>
            <person name="Hayashizaki Y."/>
        </authorList>
    </citation>
    <scope>NUCLEOTIDE SEQUENCE [LARGE SCALE MRNA]</scope>
    <source>
        <strain>C57BL/6J</strain>
        <tissue>Embryo</tissue>
    </source>
</reference>
<reference key="2">
    <citation type="journal article" date="2004" name="Genome Res.">
        <title>The status, quality, and expansion of the NIH full-length cDNA project: the Mammalian Gene Collection (MGC).</title>
        <authorList>
            <consortium name="The MGC Project Team"/>
        </authorList>
    </citation>
    <scope>NUCLEOTIDE SEQUENCE [LARGE SCALE MRNA]</scope>
    <source>
        <tissue>Mammary tumor</tissue>
    </source>
</reference>
<proteinExistence type="evidence at transcript level"/>
<accession>Q91YU3</accession>
<dbReference type="EMBL" id="AK132023">
    <property type="protein sequence ID" value="BAE20948.1"/>
    <property type="molecule type" value="mRNA"/>
</dbReference>
<dbReference type="EMBL" id="BC014729">
    <property type="protein sequence ID" value="AAH14729.1"/>
    <property type="molecule type" value="mRNA"/>
</dbReference>
<dbReference type="CCDS" id="CCDS22796.1"/>
<dbReference type="RefSeq" id="NP_663584.1">
    <property type="nucleotide sequence ID" value="NM_145609.2"/>
</dbReference>
<dbReference type="RefSeq" id="XP_006509954.1">
    <property type="nucleotide sequence ID" value="XM_006509891.3"/>
</dbReference>
<dbReference type="SMR" id="Q91YU3"/>
<dbReference type="BioGRID" id="219159">
    <property type="interactions" value="2"/>
</dbReference>
<dbReference type="FunCoup" id="Q91YU3">
    <property type="interactions" value="1937"/>
</dbReference>
<dbReference type="STRING" id="10090.ENSMUSP00000148805"/>
<dbReference type="iPTMnet" id="Q91YU3"/>
<dbReference type="PhosphoSitePlus" id="Q91YU3"/>
<dbReference type="PaxDb" id="10090-ENSMUSP00000038267"/>
<dbReference type="PeptideAtlas" id="Q91YU3"/>
<dbReference type="ProteomicsDB" id="291353"/>
<dbReference type="Antibodypedia" id="54341">
    <property type="antibodies" value="24 antibodies from 9 providers"/>
</dbReference>
<dbReference type="DNASU" id="78100"/>
<dbReference type="Ensembl" id="ENSMUST00000047173.10">
    <property type="protein sequence ID" value="ENSMUSP00000038267.10"/>
    <property type="gene ID" value="ENSMUSG00000041124.12"/>
</dbReference>
<dbReference type="Ensembl" id="ENSMUST00000212075.2">
    <property type="protein sequence ID" value="ENSMUSP00000148805.2"/>
    <property type="gene ID" value="ENSMUSG00000041124.12"/>
</dbReference>
<dbReference type="GeneID" id="78100"/>
<dbReference type="KEGG" id="mmu:78100"/>
<dbReference type="UCSC" id="uc009obm.1">
    <property type="organism name" value="mouse"/>
</dbReference>
<dbReference type="AGR" id="MGI:1925350"/>
<dbReference type="CTD" id="84437"/>
<dbReference type="MGI" id="MGI:1925350">
    <property type="gene designation" value="Msantd4"/>
</dbReference>
<dbReference type="VEuPathDB" id="HostDB:ENSMUSG00000041124"/>
<dbReference type="eggNOG" id="ENOG502RGM9">
    <property type="taxonomic scope" value="Eukaryota"/>
</dbReference>
<dbReference type="GeneTree" id="ENSGT00440000039469"/>
<dbReference type="HOGENOM" id="CLU_066150_0_0_1"/>
<dbReference type="InParanoid" id="Q91YU3"/>
<dbReference type="OMA" id="WLKANIK"/>
<dbReference type="OrthoDB" id="3066195at2759"/>
<dbReference type="PhylomeDB" id="Q91YU3"/>
<dbReference type="TreeFam" id="TF330965"/>
<dbReference type="BioGRID-ORCS" id="78100">
    <property type="hits" value="0 hits in 60 CRISPR screens"/>
</dbReference>
<dbReference type="ChiTaRS" id="Msantd4">
    <property type="organism name" value="mouse"/>
</dbReference>
<dbReference type="PRO" id="PR:Q91YU3"/>
<dbReference type="Proteomes" id="UP000000589">
    <property type="component" value="Chromosome 9"/>
</dbReference>
<dbReference type="RNAct" id="Q91YU3">
    <property type="molecule type" value="protein"/>
</dbReference>
<dbReference type="Bgee" id="ENSMUSG00000041124">
    <property type="expression patterns" value="Expressed in substantia nigra and 249 other cell types or tissues"/>
</dbReference>
<dbReference type="GO" id="GO:0005634">
    <property type="term" value="C:nucleus"/>
    <property type="evidence" value="ECO:0007669"/>
    <property type="project" value="Ensembl"/>
</dbReference>
<dbReference type="InterPro" id="IPR026162">
    <property type="entry name" value="MSANTD4"/>
</dbReference>
<dbReference type="InterPro" id="IPR028002">
    <property type="entry name" value="Myb_DNA-bind_5"/>
</dbReference>
<dbReference type="PANTHER" id="PTHR21732">
    <property type="entry name" value="MYB/SANT-LIKE DNA-BINDING DOMAIN-CONTAINING PROTEIN 4"/>
    <property type="match status" value="1"/>
</dbReference>
<dbReference type="PANTHER" id="PTHR21732:SF0">
    <property type="entry name" value="MYB_SANT-LIKE DNA-BINDING DOMAIN-CONTAINING PROTEIN 4"/>
    <property type="match status" value="1"/>
</dbReference>
<dbReference type="Pfam" id="PF13873">
    <property type="entry name" value="Myb_DNA-bind_5"/>
    <property type="match status" value="1"/>
</dbReference>
<name>MSD4_MOUSE</name>
<sequence length="345" mass="41247">MKQLKRKRKSNFSVQETQTLLKEITKRKEVIFSKQLNTTINVMKRMAWEEIAQCVNAVGEGEQRTGTEVKRRYLDWRALMKRKRMKANMKLVGSGFPLPTSDLDDSLTEDIDEKIAFRNDANFEWQNVADFRDAGGSLTEVKVEEEERDPQSPEFEIEEEEEMLSSVIPDSRRENELPDFPHIDEFFTLNSTPSRPTYDEPHLLMNIEKQKLELEKRRLDIEAERLQVEKERLQIEKERLRHLDLEHERLQLEKERLQIEREKWRLQLVSTEKPALENELGQGEKSMLQPQDIEAEKLKLERERLQLEKDRLQFLKFESEKLQIEKERLQVEKERLRIQKEGHLP</sequence>
<protein>
    <recommendedName>
        <fullName>Myb/SANT-like DNA-binding domain-containing protein 4</fullName>
    </recommendedName>
</protein>
<organism>
    <name type="scientific">Mus musculus</name>
    <name type="common">Mouse</name>
    <dbReference type="NCBI Taxonomy" id="10090"/>
    <lineage>
        <taxon>Eukaryota</taxon>
        <taxon>Metazoa</taxon>
        <taxon>Chordata</taxon>
        <taxon>Craniata</taxon>
        <taxon>Vertebrata</taxon>
        <taxon>Euteleostomi</taxon>
        <taxon>Mammalia</taxon>
        <taxon>Eutheria</taxon>
        <taxon>Euarchontoglires</taxon>
        <taxon>Glires</taxon>
        <taxon>Rodentia</taxon>
        <taxon>Myomorpha</taxon>
        <taxon>Muroidea</taxon>
        <taxon>Muridae</taxon>
        <taxon>Murinae</taxon>
        <taxon>Mus</taxon>
        <taxon>Mus</taxon>
    </lineage>
</organism>
<evidence type="ECO:0000250" key="1">
    <source>
        <dbReference type="UniProtKB" id="Q501L3"/>
    </source>
</evidence>
<evidence type="ECO:0000250" key="2">
    <source>
        <dbReference type="UniProtKB" id="Q8NCY6"/>
    </source>
</evidence>
<evidence type="ECO:0000255" key="3"/>
<evidence type="ECO:0000256" key="4">
    <source>
        <dbReference type="SAM" id="MobiDB-lite"/>
    </source>
</evidence>
<feature type="chain" id="PRO_0000311831" description="Myb/SANT-like DNA-binding domain-containing protein 4">
    <location>
        <begin position="1"/>
        <end position="345"/>
    </location>
</feature>
<feature type="domain" description="Myb-like">
    <location>
        <begin position="4"/>
        <end position="77"/>
    </location>
</feature>
<feature type="region of interest" description="Disordered" evidence="4">
    <location>
        <begin position="139"/>
        <end position="175"/>
    </location>
</feature>
<feature type="coiled-coil region" evidence="3">
    <location>
        <begin position="202"/>
        <end position="344"/>
    </location>
</feature>
<feature type="modified residue" description="Phosphoserine" evidence="1">
    <location>
        <position position="106"/>
    </location>
</feature>
<feature type="modified residue" description="Phosphothreonine" evidence="2">
    <location>
        <position position="188"/>
    </location>
</feature>
<feature type="cross-link" description="Glycyl lysine isopeptide (Lys-Gly) (interchain with G-Cter in SUMO2)" evidence="2">
    <location>
        <position position="9"/>
    </location>
</feature>
<feature type="cross-link" description="Glycyl lysine isopeptide (Lys-Gly) (interchain with G-Cter in SUMO2)" evidence="2">
    <location>
        <position position="114"/>
    </location>
</feature>
<feature type="cross-link" description="Glycyl lysine isopeptide (Lys-Gly) (interchain with G-Cter in SUMO2)" evidence="2">
    <location>
        <position position="142"/>
    </location>
</feature>
<feature type="cross-link" description="Glycyl lysine isopeptide (Lys-Gly) (interchain with G-Cter in SUMO2)" evidence="2">
    <location>
        <position position="237"/>
    </location>
</feature>
<feature type="cross-link" description="Glycyl lysine isopeptide (Lys-Gly) (interchain with G-Cter in SUMO2)" evidence="2">
    <location>
        <position position="254"/>
    </location>
</feature>
<feature type="cross-link" description="Glycyl lysine isopeptide (Lys-Gly) (interchain with G-Cter in SUMO2)" evidence="2">
    <location>
        <position position="273"/>
    </location>
</feature>
<gene>
    <name type="primary">Msantd4</name>
</gene>
<keyword id="KW-0175">Coiled coil</keyword>
<keyword id="KW-1017">Isopeptide bond</keyword>
<keyword id="KW-0597">Phosphoprotein</keyword>
<keyword id="KW-1185">Reference proteome</keyword>
<keyword id="KW-0832">Ubl conjugation</keyword>